<comment type="function">
    <text evidence="1">Catalyzes the phosphorylation of D-fructose 6-phosphate to fructose 1,6-bisphosphate by ATP, the first committing step of glycolysis.</text>
</comment>
<comment type="catalytic activity">
    <reaction evidence="1">
        <text>beta-D-fructose 6-phosphate + ATP = beta-D-fructose 1,6-bisphosphate + ADP + H(+)</text>
        <dbReference type="Rhea" id="RHEA:16109"/>
        <dbReference type="ChEBI" id="CHEBI:15378"/>
        <dbReference type="ChEBI" id="CHEBI:30616"/>
        <dbReference type="ChEBI" id="CHEBI:32966"/>
        <dbReference type="ChEBI" id="CHEBI:57634"/>
        <dbReference type="ChEBI" id="CHEBI:456216"/>
        <dbReference type="EC" id="2.7.1.11"/>
    </reaction>
</comment>
<comment type="cofactor">
    <cofactor evidence="1">
        <name>Mg(2+)</name>
        <dbReference type="ChEBI" id="CHEBI:18420"/>
    </cofactor>
</comment>
<comment type="pathway">
    <text evidence="1">Carbohydrate degradation; glycolysis; D-glyceraldehyde 3-phosphate and glycerone phosphate from D-glucose: step 3/4.</text>
</comment>
<comment type="subunit">
    <text evidence="1">Homodimer or homotetramer.</text>
</comment>
<comment type="subcellular location">
    <subcellularLocation>
        <location evidence="1">Cytoplasm</location>
    </subcellularLocation>
</comment>
<comment type="similarity">
    <text evidence="1">Belongs to the phosphofructokinase type A (PFKA) family. Mixed-substrate PFK group III subfamily.</text>
</comment>
<feature type="chain" id="PRO_0000111998" description="ATP-dependent 6-phosphofructokinase 1">
    <location>
        <begin position="1"/>
        <end position="361"/>
    </location>
</feature>
<feature type="active site" description="Proton acceptor" evidence="1">
    <location>
        <position position="142"/>
    </location>
</feature>
<feature type="binding site" evidence="1">
    <location>
        <position position="14"/>
    </location>
    <ligand>
        <name>ATP</name>
        <dbReference type="ChEBI" id="CHEBI:30616"/>
    </ligand>
</feature>
<feature type="binding site" evidence="1">
    <location>
        <begin position="79"/>
        <end position="80"/>
    </location>
    <ligand>
        <name>ATP</name>
        <dbReference type="ChEBI" id="CHEBI:30616"/>
    </ligand>
</feature>
<feature type="binding site" evidence="1">
    <location>
        <begin position="116"/>
        <end position="119"/>
    </location>
    <ligand>
        <name>ATP</name>
        <dbReference type="ChEBI" id="CHEBI:30616"/>
    </ligand>
</feature>
<feature type="binding site" evidence="1">
    <location>
        <position position="117"/>
    </location>
    <ligand>
        <name>Mg(2+)</name>
        <dbReference type="ChEBI" id="CHEBI:18420"/>
        <note>catalytic</note>
    </ligand>
</feature>
<feature type="binding site" description="in other chain" evidence="1">
    <location>
        <begin position="140"/>
        <end position="142"/>
    </location>
    <ligand>
        <name>substrate</name>
        <note>ligand shared between dimeric partners</note>
    </ligand>
</feature>
<feature type="binding site" evidence="1">
    <location>
        <position position="177"/>
    </location>
    <ligand>
        <name>substrate</name>
        <note>ligand shared between dimeric partners</note>
    </ligand>
</feature>
<feature type="binding site" description="in other chain" evidence="1">
    <location>
        <begin position="184"/>
        <end position="186"/>
    </location>
    <ligand>
        <name>substrate</name>
        <note>ligand shared between dimeric partners</note>
    </ligand>
</feature>
<feature type="binding site" description="in other chain" evidence="1">
    <location>
        <position position="237"/>
    </location>
    <ligand>
        <name>substrate</name>
        <note>ligand shared between dimeric partners</note>
    </ligand>
</feature>
<feature type="binding site" evidence="1">
    <location>
        <position position="278"/>
    </location>
    <ligand>
        <name>substrate</name>
        <note>ligand shared between dimeric partners</note>
    </ligand>
</feature>
<feature type="binding site" description="in other chain" evidence="1">
    <location>
        <begin position="284"/>
        <end position="287"/>
    </location>
    <ligand>
        <name>substrate</name>
        <note>ligand shared between dimeric partners</note>
    </ligand>
</feature>
<feature type="site" description="Important for substrate specificity; cannot use PPi as phosphoryl donor" evidence="1">
    <location>
        <position position="118"/>
    </location>
</feature>
<protein>
    <recommendedName>
        <fullName evidence="1">ATP-dependent 6-phosphofructokinase 1</fullName>
        <shortName evidence="1">ATP-PFK 1</shortName>
        <shortName evidence="1">Phosphofructokinase 1</shortName>
        <ecNumber evidence="1">2.7.1.11</ecNumber>
    </recommendedName>
    <alternativeName>
        <fullName evidence="1">Phosphohexokinase 1</fullName>
    </alternativeName>
</protein>
<evidence type="ECO:0000255" key="1">
    <source>
        <dbReference type="HAMAP-Rule" id="MF_01976"/>
    </source>
</evidence>
<proteinExistence type="inferred from homology"/>
<sequence>MGEIKRIGILTSGGDCAGLNAVIRSVVHHAIGTYGWEVIGIQEATQGLMENPSKAIALHRDNIDHLLMMGGTFLGTTNKGNPFAFPMADGTVRDRTEDIIAGYRQLGLDALIGIGGDGSLAILRRIAQQGGINLVGIPKTIDNDVGATEISIGFDTATNIATEALDRLHFTAASHNRVMVLEVMGRDAGHIALAAGIGGGADIILIPEIPYRIQSVCNKIRQRQAEGKNFCLVMVSEAVRTELGDQVKQIQQFGEDRYGGIGKYIAEQIAQRTGAETRVTVLGHIQRGGIPSPFDRLLGSVFGVAAVDLIAEGKFDHMVAWRNRQTISVPIEEAIQTYQTVQLDGTLVKTARGLGICLGND</sequence>
<organism>
    <name type="scientific">Synechocystis sp. (strain ATCC 27184 / PCC 6803 / Kazusa)</name>
    <dbReference type="NCBI Taxonomy" id="1111708"/>
    <lineage>
        <taxon>Bacteria</taxon>
        <taxon>Bacillati</taxon>
        <taxon>Cyanobacteriota</taxon>
        <taxon>Cyanophyceae</taxon>
        <taxon>Synechococcales</taxon>
        <taxon>Merismopediaceae</taxon>
        <taxon>Synechocystis</taxon>
    </lineage>
</organism>
<keyword id="KW-0067">ATP-binding</keyword>
<keyword id="KW-0963">Cytoplasm</keyword>
<keyword id="KW-0324">Glycolysis</keyword>
<keyword id="KW-0418">Kinase</keyword>
<keyword id="KW-0460">Magnesium</keyword>
<keyword id="KW-0479">Metal-binding</keyword>
<keyword id="KW-0547">Nucleotide-binding</keyword>
<keyword id="KW-1185">Reference proteome</keyword>
<keyword id="KW-0808">Transferase</keyword>
<reference key="1">
    <citation type="journal article" date="1996" name="DNA Res.">
        <title>Sequence analysis of the genome of the unicellular cyanobacterium Synechocystis sp. strain PCC6803. II. Sequence determination of the entire genome and assignment of potential protein-coding regions.</title>
        <authorList>
            <person name="Kaneko T."/>
            <person name="Sato S."/>
            <person name="Kotani H."/>
            <person name="Tanaka A."/>
            <person name="Asamizu E."/>
            <person name="Nakamura Y."/>
            <person name="Miyajima N."/>
            <person name="Hirosawa M."/>
            <person name="Sugiura M."/>
            <person name="Sasamoto S."/>
            <person name="Kimura T."/>
            <person name="Hosouchi T."/>
            <person name="Matsuno A."/>
            <person name="Muraki A."/>
            <person name="Nakazaki N."/>
            <person name="Naruo K."/>
            <person name="Okumura S."/>
            <person name="Shimpo S."/>
            <person name="Takeuchi C."/>
            <person name="Wada T."/>
            <person name="Watanabe A."/>
            <person name="Yamada M."/>
            <person name="Yasuda M."/>
            <person name="Tabata S."/>
        </authorList>
    </citation>
    <scope>NUCLEOTIDE SEQUENCE [LARGE SCALE GENOMIC DNA]</scope>
    <source>
        <strain>ATCC 27184 / PCC 6803 / Kazusa</strain>
    </source>
</reference>
<dbReference type="EC" id="2.7.1.11" evidence="1"/>
<dbReference type="EMBL" id="BA000022">
    <property type="protein sequence ID" value="BAA16845.1"/>
    <property type="molecule type" value="Genomic_DNA"/>
</dbReference>
<dbReference type="PIR" id="S74694">
    <property type="entry name" value="S74694"/>
</dbReference>
<dbReference type="SMR" id="P72830"/>
<dbReference type="FunCoup" id="P72830">
    <property type="interactions" value="307"/>
</dbReference>
<dbReference type="IntAct" id="P72830">
    <property type="interactions" value="1"/>
</dbReference>
<dbReference type="STRING" id="1148.gene:10497703"/>
<dbReference type="PaxDb" id="1148-1651919"/>
<dbReference type="EnsemblBacteria" id="BAA16845">
    <property type="protein sequence ID" value="BAA16845"/>
    <property type="gene ID" value="BAA16845"/>
</dbReference>
<dbReference type="KEGG" id="syn:sll1196"/>
<dbReference type="eggNOG" id="COG0205">
    <property type="taxonomic scope" value="Bacteria"/>
</dbReference>
<dbReference type="InParanoid" id="P72830"/>
<dbReference type="PhylomeDB" id="P72830"/>
<dbReference type="UniPathway" id="UPA00109">
    <property type="reaction ID" value="UER00182"/>
</dbReference>
<dbReference type="Proteomes" id="UP000001425">
    <property type="component" value="Chromosome"/>
</dbReference>
<dbReference type="GO" id="GO:0005737">
    <property type="term" value="C:cytoplasm"/>
    <property type="evidence" value="ECO:0007669"/>
    <property type="project" value="UniProtKB-SubCell"/>
</dbReference>
<dbReference type="GO" id="GO:0003872">
    <property type="term" value="F:6-phosphofructokinase activity"/>
    <property type="evidence" value="ECO:0007669"/>
    <property type="project" value="UniProtKB-UniRule"/>
</dbReference>
<dbReference type="GO" id="GO:0005524">
    <property type="term" value="F:ATP binding"/>
    <property type="evidence" value="ECO:0007669"/>
    <property type="project" value="UniProtKB-KW"/>
</dbReference>
<dbReference type="GO" id="GO:0047334">
    <property type="term" value="F:diphosphate-fructose-6-phosphate 1-phosphotransferase activity"/>
    <property type="evidence" value="ECO:0007669"/>
    <property type="project" value="InterPro"/>
</dbReference>
<dbReference type="GO" id="GO:0046872">
    <property type="term" value="F:metal ion binding"/>
    <property type="evidence" value="ECO:0007669"/>
    <property type="project" value="UniProtKB-KW"/>
</dbReference>
<dbReference type="GO" id="GO:0006002">
    <property type="term" value="P:fructose 6-phosphate metabolic process"/>
    <property type="evidence" value="ECO:0007669"/>
    <property type="project" value="InterPro"/>
</dbReference>
<dbReference type="FunFam" id="3.40.50.460:FF:000002">
    <property type="entry name" value="ATP-dependent 6-phosphofructokinase"/>
    <property type="match status" value="1"/>
</dbReference>
<dbReference type="Gene3D" id="3.40.50.450">
    <property type="match status" value="1"/>
</dbReference>
<dbReference type="Gene3D" id="3.40.50.460">
    <property type="entry name" value="Phosphofructokinase domain"/>
    <property type="match status" value="1"/>
</dbReference>
<dbReference type="HAMAP" id="MF_01976">
    <property type="entry name" value="Phosphofructokinase_III"/>
    <property type="match status" value="1"/>
</dbReference>
<dbReference type="InterPro" id="IPR022953">
    <property type="entry name" value="ATP_PFK"/>
</dbReference>
<dbReference type="InterPro" id="IPR012003">
    <property type="entry name" value="ATP_PFK_prok-type"/>
</dbReference>
<dbReference type="InterPro" id="IPR015912">
    <property type="entry name" value="Phosphofructokinase_CS"/>
</dbReference>
<dbReference type="InterPro" id="IPR000023">
    <property type="entry name" value="Phosphofructokinase_dom"/>
</dbReference>
<dbReference type="InterPro" id="IPR012829">
    <property type="entry name" value="Phosphofructokinase_III"/>
</dbReference>
<dbReference type="InterPro" id="IPR035966">
    <property type="entry name" value="PKF_sf"/>
</dbReference>
<dbReference type="NCBIfam" id="TIGR02483">
    <property type="entry name" value="PFK_mixed"/>
    <property type="match status" value="1"/>
</dbReference>
<dbReference type="NCBIfam" id="NF002872">
    <property type="entry name" value="PRK03202.1"/>
    <property type="match status" value="1"/>
</dbReference>
<dbReference type="NCBIfam" id="NF010674">
    <property type="entry name" value="PRK14071.1"/>
    <property type="match status" value="1"/>
</dbReference>
<dbReference type="PANTHER" id="PTHR13697:SF52">
    <property type="entry name" value="ATP-DEPENDENT 6-PHOSPHOFRUCTOKINASE 3"/>
    <property type="match status" value="1"/>
</dbReference>
<dbReference type="PANTHER" id="PTHR13697">
    <property type="entry name" value="PHOSPHOFRUCTOKINASE"/>
    <property type="match status" value="1"/>
</dbReference>
<dbReference type="Pfam" id="PF00365">
    <property type="entry name" value="PFK"/>
    <property type="match status" value="1"/>
</dbReference>
<dbReference type="PIRSF" id="PIRSF000532">
    <property type="entry name" value="ATP_PFK_prok"/>
    <property type="match status" value="1"/>
</dbReference>
<dbReference type="PRINTS" id="PR00476">
    <property type="entry name" value="PHFRCTKINASE"/>
</dbReference>
<dbReference type="SUPFAM" id="SSF53784">
    <property type="entry name" value="Phosphofructokinase"/>
    <property type="match status" value="1"/>
</dbReference>
<dbReference type="PROSITE" id="PS00433">
    <property type="entry name" value="PHOSPHOFRUCTOKINASE"/>
    <property type="match status" value="1"/>
</dbReference>
<gene>
    <name evidence="1" type="primary">pfkA1</name>
    <name type="synonym">pfkA</name>
    <name type="ordered locus">sll1196</name>
</gene>
<accession>P72830</accession>
<name>PFKA1_SYNY3</name>